<reference key="1">
    <citation type="journal article" date="1993" name="Virus Genes">
        <title>Comparative sequence analysis of the M gene among rabies virus strains and its expression by recombinant vaccinia virus.</title>
        <authorList>
            <person name="Hiramatsu K."/>
            <person name="Mannen K."/>
            <person name="Mifune K."/>
            <person name="Nishizono A."/>
            <person name="Takita-Sonoda Y."/>
        </authorList>
    </citation>
    <scope>NUCLEOTIDE SEQUENCE [GENOMIC RNA]</scope>
</reference>
<reference key="2">
    <citation type="journal article" date="2001" name="Microbiol. Immunol.">
        <title>A comparison of complete genome sequences of the attenuated RC-HL strain of rabies virus used for production of animal vaccine in Japan, and the parental Nishigahara strain.</title>
        <authorList>
            <person name="Ito N."/>
            <person name="Kakemizu M."/>
            <person name="Ito K.A."/>
            <person name="Yamamoto A."/>
            <person name="Yoshida Y."/>
            <person name="Sugiyama M."/>
            <person name="Minamoto N."/>
        </authorList>
    </citation>
    <scope>NUCLEOTIDE SEQUENCE [GENOMIC RNA]</scope>
    <source>
        <strain>Nishigahara 2001</strain>
        <strain>RC-HL</strain>
    </source>
</reference>
<reference key="3">
    <citation type="journal article" date="2007" name="Virus Res.">
        <title>Involvement of nucleoprotein, phosphoprotein, and matrix protein genes of rabies virus in virulence for adult mice.</title>
        <authorList>
            <person name="Shimizu K."/>
            <person name="Ito N."/>
            <person name="Mita T."/>
            <person name="Yamada K."/>
            <person name="Hosokawa-Muto J."/>
            <person name="Sugiyama M."/>
            <person name="Minamoto N."/>
        </authorList>
    </citation>
    <scope>NUCLEOTIDE SEQUENCE [GENOMIC RNA]</scope>
    <source>
        <strain>Ni-CE</strain>
    </source>
</reference>
<reference key="4">
    <citation type="journal article" date="2022" name="J. Virol.">
        <title>The Amino Acid at Position 95 in the Matrix Protein of Rabies Virus Is Involved in Antiviral Stress Granule Formation in Infected Cells.</title>
        <authorList>
            <person name="Kojima I."/>
            <person name="Onomoto K."/>
            <person name="Zuo W."/>
            <person name="Ozawa M."/>
            <person name="Okuya K."/>
            <person name="Naitou K."/>
            <person name="Izumi F."/>
            <person name="Okajima M."/>
            <person name="Fujiwara T."/>
            <person name="Ito N."/>
            <person name="Yoneyama M."/>
            <person name="Yamada K."/>
            <person name="Nishizono A."/>
            <person name="Sugiyama M."/>
            <person name="Fujita T."/>
            <person name="Masatani T."/>
        </authorList>
    </citation>
    <scope>FUNCTION</scope>
    <scope>MUTAGENESIS OF VAL-95</scope>
</reference>
<comment type="function">
    <text evidence="2 5">Plays a major role in assembly, budding and uncoating of virion after membrane fusion. Completely covers the ribonucleoprotein coil and keep it in condensed bullet-shaped form. Inhibits viral transcription and stimulates replication. Plays a major role in early induction of TRAIL-mediated apoptosis in infected neurons (By similarity). Inhibits the integrated stress response (ISR) in the infected cell by blocking the formation of stress granules (PubMed:36069552).</text>
</comment>
<comment type="subunit">
    <text evidence="2">Homomultimer. Interacts with nucleoprotein and with the cytoplasmic domain of glycoprotein. Interacts with host ATP6V1A; this interaction plays an important role in virion uncoating after viral entry.</text>
</comment>
<comment type="subcellular location">
    <subcellularLocation>
        <location evidence="2">Virion membrane</location>
        <topology evidence="2">Peripheral membrane protein</topology>
    </subcellularLocation>
    <subcellularLocation>
        <location evidence="2">Host endomembrane system</location>
        <topology evidence="2">Peripheral membrane protein</topology>
    </subcellularLocation>
    <subcellularLocation>
        <location evidence="2">Host cytoplasm</location>
    </subcellularLocation>
</comment>
<comment type="domain">
    <text evidence="6">Late-budding domains (L domains) are short sequence motifs essential for viral particle budding. They recruit proteins of the host ESCRT machinery (Endosomal Sorting Complex Required for Transport) or ESCRT-associated proteins. Matrix protein contains one L domain: a PPXY motif which potentially interacts with the WW domain 3 of NEDD4 E3 ubiquitin ligase (Potential).</text>
</comment>
<comment type="miscellaneous">
    <text evidence="5">The avirulent strain Ni-CE does not block the formation of stress granules.</text>
</comment>
<comment type="miscellaneous">
    <text evidence="1">Most abundant protein in the virion.</text>
</comment>
<comment type="similarity">
    <text evidence="6">Belongs to the lyssavirus matrix protein family.</text>
</comment>
<protein>
    <recommendedName>
        <fullName>Matrix protein</fullName>
    </recommendedName>
    <alternativeName>
        <fullName>Phosphoprotein M2</fullName>
    </alternativeName>
</protein>
<gene>
    <name type="primary">M</name>
</gene>
<keyword id="KW-1035">Host cytoplasm</keyword>
<keyword id="KW-1043">Host membrane</keyword>
<keyword id="KW-0945">Host-virus interaction</keyword>
<keyword id="KW-0472">Membrane</keyword>
<keyword id="KW-0597">Phosphoprotein</keyword>
<keyword id="KW-1198">Viral budding</keyword>
<keyword id="KW-1187">Viral budding via the host ESCRT complexes</keyword>
<keyword id="KW-0261">Viral envelope protein</keyword>
<keyword id="KW-0468">Viral matrix protein</keyword>
<keyword id="KW-1188">Viral release from host cell</keyword>
<keyword id="KW-0946">Virion</keyword>
<accession>P25224</accession>
<accession>Q75T10</accession>
<accession>Q787B6</accession>
<accession>Q9IPJ7</accession>
<organismHost>
    <name type="scientific">Homo sapiens</name>
    <name type="common">Human</name>
    <dbReference type="NCBI Taxonomy" id="9606"/>
</organismHost>
<organismHost>
    <name type="scientific">Mammalia</name>
    <dbReference type="NCBI Taxonomy" id="40674"/>
</organismHost>
<dbReference type="EMBL" id="D10482">
    <property type="protein sequence ID" value="BAA01285.1"/>
    <property type="molecule type" value="Genomic_RNA"/>
</dbReference>
<dbReference type="EMBL" id="AB044824">
    <property type="protein sequence ID" value="BAA96804.1"/>
    <property type="molecule type" value="Genomic_RNA"/>
</dbReference>
<dbReference type="EMBL" id="AB009663">
    <property type="protein sequence ID" value="BAA24085.1"/>
    <property type="molecule type" value="Genomic_RNA"/>
</dbReference>
<dbReference type="EMBL" id="AB128149">
    <property type="protein sequence ID" value="BAD04912.1"/>
    <property type="molecule type" value="Genomic_RNA"/>
</dbReference>
<dbReference type="PIR" id="JQ1113">
    <property type="entry name" value="MFVNNA"/>
</dbReference>
<dbReference type="SMR" id="P25224"/>
<dbReference type="Proteomes" id="UP000006366">
    <property type="component" value="Genome"/>
</dbReference>
<dbReference type="Proteomes" id="UP000007309">
    <property type="component" value="Genome"/>
</dbReference>
<dbReference type="Proteomes" id="UP000007310">
    <property type="component" value="Genome"/>
</dbReference>
<dbReference type="GO" id="GO:0030430">
    <property type="term" value="C:host cell cytoplasm"/>
    <property type="evidence" value="ECO:0007669"/>
    <property type="project" value="UniProtKB-SubCell"/>
</dbReference>
<dbReference type="GO" id="GO:0033645">
    <property type="term" value="C:host cell endomembrane system"/>
    <property type="evidence" value="ECO:0007669"/>
    <property type="project" value="UniProtKB-SubCell"/>
</dbReference>
<dbReference type="GO" id="GO:0016020">
    <property type="term" value="C:membrane"/>
    <property type="evidence" value="ECO:0007669"/>
    <property type="project" value="UniProtKB-KW"/>
</dbReference>
<dbReference type="GO" id="GO:0019031">
    <property type="term" value="C:viral envelope"/>
    <property type="evidence" value="ECO:0007669"/>
    <property type="project" value="UniProtKB-KW"/>
</dbReference>
<dbReference type="GO" id="GO:0055036">
    <property type="term" value="C:virion membrane"/>
    <property type="evidence" value="ECO:0007669"/>
    <property type="project" value="UniProtKB-SubCell"/>
</dbReference>
<dbReference type="GO" id="GO:0039660">
    <property type="term" value="F:structural constituent of virion"/>
    <property type="evidence" value="ECO:0007669"/>
    <property type="project" value="UniProtKB-KW"/>
</dbReference>
<dbReference type="GO" id="GO:0039702">
    <property type="term" value="P:viral budding via host ESCRT complex"/>
    <property type="evidence" value="ECO:0007669"/>
    <property type="project" value="UniProtKB-KW"/>
</dbReference>
<dbReference type="FunFam" id="3.10.460.20:FF:000001">
    <property type="entry name" value="Matrix protein"/>
    <property type="match status" value="1"/>
</dbReference>
<dbReference type="Gene3D" id="3.10.460.20">
    <property type="entry name" value="Rhabdovirus matrix protein M2"/>
    <property type="match status" value="1"/>
</dbReference>
<dbReference type="InterPro" id="IPR006870">
    <property type="entry name" value="Rhabdo_M"/>
</dbReference>
<dbReference type="InterPro" id="IPR038617">
    <property type="entry name" value="Rhabdovirus_M_sf"/>
</dbReference>
<dbReference type="Pfam" id="PF04785">
    <property type="entry name" value="Rhabdo_M2"/>
    <property type="match status" value="1"/>
</dbReference>
<feature type="chain" id="PRO_0000222849" description="Matrix protein">
    <location>
        <begin position="1"/>
        <end position="202"/>
    </location>
</feature>
<feature type="region of interest" description="Disordered" evidence="4">
    <location>
        <begin position="1"/>
        <end position="33"/>
    </location>
</feature>
<feature type="region of interest" description="Essential for glycoprotein binding" evidence="1">
    <location>
        <begin position="115"/>
        <end position="151"/>
    </location>
</feature>
<feature type="short sequence motif" description="PPXY motif" evidence="3">
    <location>
        <begin position="35"/>
        <end position="38"/>
    </location>
</feature>
<feature type="site" description="Involved in the inhibition of stress granules formation and contributes therefore to virulence" evidence="5">
    <location>
        <position position="95"/>
    </location>
</feature>
<feature type="sequence variant" description="In strain: Ni-CE and Nishigahara 2001.">
    <original>R</original>
    <variation>C</variation>
    <location>
        <position position="11"/>
    </location>
</feature>
<feature type="sequence variant" description="In strain: Ni-CE.">
    <original>D</original>
    <variation>E</variation>
    <location>
        <position position="29"/>
    </location>
</feature>
<feature type="sequence variant" description="In strain: Ni-CE.">
    <original>V</original>
    <variation>A</variation>
    <location>
        <position position="95"/>
    </location>
</feature>
<feature type="sequence variant" description="In strain: Ni-CE and Nishigahara 2001.">
    <original>I</original>
    <variation>S</variation>
    <location>
        <position position="158"/>
    </location>
</feature>
<feature type="sequence variant" description="In strain: Ni-CE and Nishigahara 2001.">
    <original>T</original>
    <variation>A</variation>
    <location>
        <position position="177"/>
    </location>
</feature>
<feature type="mutagenesis site" description="Complete loss of inhibition of stress granules formation." evidence="5">
    <original>V</original>
    <variation>A</variation>
    <location>
        <position position="95"/>
    </location>
</feature>
<proteinExistence type="evidence at protein level"/>
<name>MATRX_RABVN</name>
<organism>
    <name type="scientific">Rabies virus (strain Nishigahara RCEH)</name>
    <name type="common">RABV</name>
    <dbReference type="NCBI Taxonomy" id="11298"/>
    <lineage>
        <taxon>Viruses</taxon>
        <taxon>Riboviria</taxon>
        <taxon>Orthornavirae</taxon>
        <taxon>Negarnaviricota</taxon>
        <taxon>Haploviricotina</taxon>
        <taxon>Monjiviricetes</taxon>
        <taxon>Mononegavirales</taxon>
        <taxon>Rhabdoviridae</taxon>
        <taxon>Alpharhabdovirinae</taxon>
        <taxon>Lyssavirus</taxon>
        <taxon>Lyssavirus rabies</taxon>
    </lineage>
</organism>
<evidence type="ECO:0000250" key="1"/>
<evidence type="ECO:0000250" key="2">
    <source>
        <dbReference type="UniProtKB" id="P16287"/>
    </source>
</evidence>
<evidence type="ECO:0000255" key="3"/>
<evidence type="ECO:0000256" key="4">
    <source>
        <dbReference type="SAM" id="MobiDB-lite"/>
    </source>
</evidence>
<evidence type="ECO:0000269" key="5">
    <source>
    </source>
</evidence>
<evidence type="ECO:0000305" key="6"/>
<sequence length="202" mass="23321">MNILRKIVKNRKDEDTQKPSPASAPPDDDDLWLPPPEYVPLKEFTSKKNMRNFCINGEVKVCSPNGYSFRILRHILRSFDEIYSGNHRMIGLVKVVIGLALSGAPVPEGMNWVYKLRRTLIFQWADSRGPLEGEELEHSQEITWDDDTEFVGLQIRVIARQCHIQGRIWCINTNSRTCQLWSDMSLKTQMSEEDKDSSLLLE</sequence>